<feature type="initiator methionine" description="Removed" evidence="9">
    <location>
        <position position="1"/>
    </location>
</feature>
<feature type="chain" id="PRO_0000051079" description="Protein MAK11">
    <location>
        <begin position="2"/>
        <end position="414"/>
    </location>
</feature>
<feature type="repeat" description="WD 1">
    <location>
        <begin position="50"/>
        <end position="78"/>
    </location>
</feature>
<feature type="repeat" description="WD 2">
    <location>
        <begin position="90"/>
        <end position="135"/>
    </location>
</feature>
<feature type="repeat" description="WD 3">
    <location>
        <begin position="147"/>
        <end position="177"/>
    </location>
</feature>
<feature type="repeat" description="WD 4">
    <location>
        <begin position="189"/>
        <end position="221"/>
    </location>
</feature>
<feature type="repeat" description="WD 5">
    <location>
        <begin position="238"/>
        <end position="267"/>
    </location>
</feature>
<feature type="repeat" description="WD 6">
    <location>
        <begin position="298"/>
        <end position="330"/>
    </location>
</feature>
<feature type="modified residue" description="N-acetylserine" evidence="9">
    <location>
        <position position="2"/>
    </location>
</feature>
<feature type="modified residue" description="Phosphoserine" evidence="6 7 8">
    <location>
        <position position="376"/>
    </location>
</feature>
<feature type="modified residue" description="Phosphoserine" evidence="6 7 8">
    <location>
        <position position="380"/>
    </location>
</feature>
<feature type="modified residue" description="Phosphothreonine" evidence="7">
    <location>
        <position position="382"/>
    </location>
</feature>
<accession>P20484</accession>
<accession>D6VXR4</accession>
<gene>
    <name type="primary">MAK11</name>
    <name type="ordered locus">YKL021C</name>
</gene>
<reference key="1">
    <citation type="journal article" date="1988" name="J. Biol. Chem.">
        <title>The MAK11 protein is essential for cell growth and replication of M double-stranded RNA and is apparently a membrane-associated protein.</title>
        <authorList>
            <person name="Icho T."/>
            <person name="Wickner R.B."/>
        </authorList>
    </citation>
    <scope>NUCLEOTIDE SEQUENCE [GENOMIC DNA]</scope>
    <scope>FUNCTION</scope>
    <scope>SUBCELLULAR LOCATION</scope>
</reference>
<reference key="2">
    <citation type="journal article" date="1994" name="Nature">
        <title>Complete DNA sequence of yeast chromosome XI.</title>
        <authorList>
            <person name="Dujon B."/>
            <person name="Alexandraki D."/>
            <person name="Andre B."/>
            <person name="Ansorge W."/>
            <person name="Baladron V."/>
            <person name="Ballesta J.P.G."/>
            <person name="Banrevi A."/>
            <person name="Bolle P.-A."/>
            <person name="Bolotin-Fukuhara M."/>
            <person name="Bossier P."/>
            <person name="Bou G."/>
            <person name="Boyer J."/>
            <person name="Buitrago M.J."/>
            <person name="Cheret G."/>
            <person name="Colleaux L."/>
            <person name="Daignan-Fornier B."/>
            <person name="del Rey F."/>
            <person name="Dion C."/>
            <person name="Domdey H."/>
            <person name="Duesterhoeft A."/>
            <person name="Duesterhus S."/>
            <person name="Entian K.-D."/>
            <person name="Erfle H."/>
            <person name="Esteban P.F."/>
            <person name="Feldmann H."/>
            <person name="Fernandes L."/>
            <person name="Fobo G.M."/>
            <person name="Fritz C."/>
            <person name="Fukuhara H."/>
            <person name="Gabel C."/>
            <person name="Gaillon L."/>
            <person name="Garcia-Cantalejo J.M."/>
            <person name="Garcia-Ramirez J.J."/>
            <person name="Gent M.E."/>
            <person name="Ghazvini M."/>
            <person name="Goffeau A."/>
            <person name="Gonzalez A."/>
            <person name="Grothues D."/>
            <person name="Guerreiro P."/>
            <person name="Hegemann J.H."/>
            <person name="Hewitt N."/>
            <person name="Hilger F."/>
            <person name="Hollenberg C.P."/>
            <person name="Horaitis O."/>
            <person name="Indge K.J."/>
            <person name="Jacquier A."/>
            <person name="James C.M."/>
            <person name="Jauniaux J.-C."/>
            <person name="Jimenez A."/>
            <person name="Keuchel H."/>
            <person name="Kirchrath L."/>
            <person name="Kleine K."/>
            <person name="Koetter P."/>
            <person name="Legrain P."/>
            <person name="Liebl S."/>
            <person name="Louis E.J."/>
            <person name="Maia e Silva A."/>
            <person name="Marck C."/>
            <person name="Monnier A.-L."/>
            <person name="Moestl D."/>
            <person name="Mueller S."/>
            <person name="Obermaier B."/>
            <person name="Oliver S.G."/>
            <person name="Pallier C."/>
            <person name="Pascolo S."/>
            <person name="Pfeiffer F."/>
            <person name="Philippsen P."/>
            <person name="Planta R.J."/>
            <person name="Pohl F.M."/>
            <person name="Pohl T.M."/>
            <person name="Poehlmann R."/>
            <person name="Portetelle D."/>
            <person name="Purnelle B."/>
            <person name="Puzos V."/>
            <person name="Ramezani Rad M."/>
            <person name="Rasmussen S.W."/>
            <person name="Remacha M.A."/>
            <person name="Revuelta J.L."/>
            <person name="Richard G.-F."/>
            <person name="Rieger M."/>
            <person name="Rodrigues-Pousada C."/>
            <person name="Rose M."/>
            <person name="Rupp T."/>
            <person name="Santos M.A."/>
            <person name="Schwager C."/>
            <person name="Sensen C."/>
            <person name="Skala J."/>
            <person name="Soares H."/>
            <person name="Sor F."/>
            <person name="Stegemann J."/>
            <person name="Tettelin H."/>
            <person name="Thierry A."/>
            <person name="Tzermia M."/>
            <person name="Urrestarazu L.A."/>
            <person name="van Dyck L."/>
            <person name="van Vliet-Reedijk J.C."/>
            <person name="Valens M."/>
            <person name="Vandenbol M."/>
            <person name="Vilela C."/>
            <person name="Vissers S."/>
            <person name="von Wettstein D."/>
            <person name="Voss H."/>
            <person name="Wiemann S."/>
            <person name="Xu G."/>
            <person name="Zimmermann J."/>
            <person name="Haasemann M."/>
            <person name="Becker I."/>
            <person name="Mewes H.-W."/>
        </authorList>
    </citation>
    <scope>NUCLEOTIDE SEQUENCE [LARGE SCALE GENOMIC DNA]</scope>
    <source>
        <strain>ATCC 204508 / S288c</strain>
    </source>
</reference>
<reference key="3">
    <citation type="journal article" date="2014" name="G3 (Bethesda)">
        <title>The reference genome sequence of Saccharomyces cerevisiae: Then and now.</title>
        <authorList>
            <person name="Engel S.R."/>
            <person name="Dietrich F.S."/>
            <person name="Fisk D.G."/>
            <person name="Binkley G."/>
            <person name="Balakrishnan R."/>
            <person name="Costanzo M.C."/>
            <person name="Dwight S.S."/>
            <person name="Hitz B.C."/>
            <person name="Karra K."/>
            <person name="Nash R.S."/>
            <person name="Weng S."/>
            <person name="Wong E.D."/>
            <person name="Lloyd P."/>
            <person name="Skrzypek M.S."/>
            <person name="Miyasato S.R."/>
            <person name="Simison M."/>
            <person name="Cherry J.M."/>
        </authorList>
    </citation>
    <scope>GENOME REANNOTATION</scope>
    <source>
        <strain>ATCC 204508 / S288c</strain>
    </source>
</reference>
<reference key="4">
    <citation type="journal article" date="1995" name="Mol. Cell. Biol.">
        <title>Yeast virus propagation depends critically on free 60S ribosomal subunit concentration.</title>
        <authorList>
            <person name="Ohtake Y."/>
            <person name="Wickner R.B."/>
        </authorList>
    </citation>
    <scope>FUNCTION</scope>
</reference>
<reference key="5">
    <citation type="journal article" date="2002" name="EMBO J.">
        <title>60S pre-ribosome formation viewed from assembly in the nucleolus until export to the cytoplasm.</title>
        <authorList>
            <person name="Nissan T.A."/>
            <person name="Bassler J."/>
            <person name="Petfalski E."/>
            <person name="Tollervey D."/>
            <person name="Hurt E."/>
        </authorList>
    </citation>
    <scope>INTERACTION WITH 60S PRE-RIBOSOMAL PARTICLES</scope>
    <scope>IDENTIFICATION BY MASS SPECTROMETRY</scope>
</reference>
<reference key="6">
    <citation type="journal article" date="2003" name="Mol. Cell. Biol.">
        <title>Sequential protein association with nascent 60S ribosomal particles.</title>
        <authorList>
            <person name="Saveanu C."/>
            <person name="Namane A."/>
            <person name="Gleizes P.-E."/>
            <person name="Lebreton A."/>
            <person name="Rousselle J.-C."/>
            <person name="Noaillac-Depeyre J."/>
            <person name="Gas N."/>
            <person name="Jacquier A."/>
            <person name="Fromont-Racine M."/>
        </authorList>
    </citation>
    <scope>FUNCTION</scope>
    <scope>INTERACTION WITH 60S PRE-RIBOSOMAL PARTICLES</scope>
    <scope>IDENTIFICATION BY MASS SPECTROMETRY</scope>
</reference>
<reference key="7">
    <citation type="journal article" date="2003" name="Nature">
        <title>Global analysis of protein expression in yeast.</title>
        <authorList>
            <person name="Ghaemmaghami S."/>
            <person name="Huh W.-K."/>
            <person name="Bower K."/>
            <person name="Howson R.W."/>
            <person name="Belle A."/>
            <person name="Dephoure N."/>
            <person name="O'Shea E.K."/>
            <person name="Weissman J.S."/>
        </authorList>
    </citation>
    <scope>LEVEL OF PROTEIN EXPRESSION [LARGE SCALE ANALYSIS]</scope>
</reference>
<reference key="8">
    <citation type="journal article" date="2007" name="J. Proteome Res.">
        <title>Large-scale phosphorylation analysis of alpha-factor-arrested Saccharomyces cerevisiae.</title>
        <authorList>
            <person name="Li X."/>
            <person name="Gerber S.A."/>
            <person name="Rudner A.D."/>
            <person name="Beausoleil S.A."/>
            <person name="Haas W."/>
            <person name="Villen J."/>
            <person name="Elias J.E."/>
            <person name="Gygi S.P."/>
        </authorList>
    </citation>
    <scope>PHOSPHORYLATION [LARGE SCALE ANALYSIS] AT SER-376 AND SER-380</scope>
    <scope>IDENTIFICATION BY MASS SPECTROMETRY [LARGE SCALE ANALYSIS]</scope>
    <source>
        <strain>ADR376</strain>
    </source>
</reference>
<reference key="9">
    <citation type="journal article" date="2008" name="Mol. Cell. Proteomics">
        <title>A multidimensional chromatography technology for in-depth phosphoproteome analysis.</title>
        <authorList>
            <person name="Albuquerque C.P."/>
            <person name="Smolka M.B."/>
            <person name="Payne S.H."/>
            <person name="Bafna V."/>
            <person name="Eng J."/>
            <person name="Zhou H."/>
        </authorList>
    </citation>
    <scope>PHOSPHORYLATION [LARGE SCALE ANALYSIS] AT SER-376; SER-380 AND THR-382</scope>
    <scope>IDENTIFICATION BY MASS SPECTROMETRY [LARGE SCALE ANALYSIS]</scope>
</reference>
<reference key="10">
    <citation type="journal article" date="2009" name="Science">
        <title>Global analysis of Cdk1 substrate phosphorylation sites provides insights into evolution.</title>
        <authorList>
            <person name="Holt L.J."/>
            <person name="Tuch B.B."/>
            <person name="Villen J."/>
            <person name="Johnson A.D."/>
            <person name="Gygi S.P."/>
            <person name="Morgan D.O."/>
        </authorList>
    </citation>
    <scope>PHOSPHORYLATION [LARGE SCALE ANALYSIS] AT SER-376 AND SER-380</scope>
    <scope>IDENTIFICATION BY MASS SPECTROMETRY [LARGE SCALE ANALYSIS]</scope>
</reference>
<reference key="11">
    <citation type="journal article" date="2012" name="Proc. Natl. Acad. Sci. U.S.A.">
        <title>N-terminal acetylome analyses and functional insights of the N-terminal acetyltransferase NatB.</title>
        <authorList>
            <person name="Van Damme P."/>
            <person name="Lasa M."/>
            <person name="Polevoda B."/>
            <person name="Gazquez C."/>
            <person name="Elosegui-Artola A."/>
            <person name="Kim D.S."/>
            <person name="De Juan-Pardo E."/>
            <person name="Demeyer K."/>
            <person name="Hole K."/>
            <person name="Larrea E."/>
            <person name="Timmerman E."/>
            <person name="Prieto J."/>
            <person name="Arnesen T."/>
            <person name="Sherman F."/>
            <person name="Gevaert K."/>
            <person name="Aldabe R."/>
        </authorList>
    </citation>
    <scope>ACETYLATION [LARGE SCALE ANALYSIS] AT SER-2</scope>
    <scope>CLEAVAGE OF INITIATOR METHIONINE [LARGE SCALE ANALYSIS]</scope>
    <scope>IDENTIFICATION BY MASS SPECTROMETRY [LARGE SCALE ANALYSIS]</scope>
</reference>
<organism>
    <name type="scientific">Saccharomyces cerevisiae (strain ATCC 204508 / S288c)</name>
    <name type="common">Baker's yeast</name>
    <dbReference type="NCBI Taxonomy" id="559292"/>
    <lineage>
        <taxon>Eukaryota</taxon>
        <taxon>Fungi</taxon>
        <taxon>Dikarya</taxon>
        <taxon>Ascomycota</taxon>
        <taxon>Saccharomycotina</taxon>
        <taxon>Saccharomycetes</taxon>
        <taxon>Saccharomycetales</taxon>
        <taxon>Saccharomycetaceae</taxon>
        <taxon>Saccharomyces</taxon>
    </lineage>
</organism>
<protein>
    <recommendedName>
        <fullName>Protein MAK11</fullName>
    </recommendedName>
    <alternativeName>
        <fullName>Maintenance of killer protein 11</fullName>
    </alternativeName>
</protein>
<name>MAK11_YEAST</name>
<sequence length="414" mass="47291">MSAIGDKNQFRIIVGSYEHNILCLSLDIPNQKENDAAKTPHFMPIFHFQAHSLSIKCLAVSRRYLVSGSNDEHIRIYDLQKRKELGTLLSHQGSITALQFSHPASSSEDAAVSKGSKNSKWLLSASEDHKIMVWRVKDWETVGTLKGHTARVNDVDIHPTNRIAISVSDDHSIRLWNLMTLRNAAVLKLRKYNTNGTCVRWLGAKGDYFAVGLRDRVLIYETGSAKVFKEIVFQRKTLMHIETHILPFDNKEYLSVGISDGNVHFYPCEELFEKVEENEKQEDDDDKEDISPAFSLLGHTNRIKDFKFYTNEFGTYLVTIGSDGKIVVWDMSTKEQVAVYDCGERLNCLTLCDESIEKYNTMKKRDAETADIGDQSEVESDTEELKKIMFGEKKKLNKKKRKQLKKSKVSVELE</sequence>
<keyword id="KW-0007">Acetylation</keyword>
<keyword id="KW-0472">Membrane</keyword>
<keyword id="KW-0539">Nucleus</keyword>
<keyword id="KW-0597">Phosphoprotein</keyword>
<keyword id="KW-1185">Reference proteome</keyword>
<keyword id="KW-0677">Repeat</keyword>
<keyword id="KW-0690">Ribosome biogenesis</keyword>
<keyword id="KW-0853">WD repeat</keyword>
<dbReference type="EMBL" id="J03506">
    <property type="protein sequence ID" value="AAA34750.1"/>
    <property type="status" value="ALT_INIT"/>
    <property type="molecule type" value="Genomic_DNA"/>
</dbReference>
<dbReference type="EMBL" id="Z28021">
    <property type="protein sequence ID" value="CAA81856.1"/>
    <property type="status" value="ALT_INIT"/>
    <property type="molecule type" value="Genomic_DNA"/>
</dbReference>
<dbReference type="EMBL" id="BK006944">
    <property type="protein sequence ID" value="DAA09134.1"/>
    <property type="status" value="ALT_INIT"/>
    <property type="molecule type" value="Genomic_DNA"/>
</dbReference>
<dbReference type="PIR" id="A29938">
    <property type="entry name" value="A29938"/>
</dbReference>
<dbReference type="RefSeq" id="NP_012904.3">
    <property type="nucleotide sequence ID" value="NM_001179587.3"/>
</dbReference>
<dbReference type="SMR" id="P20484"/>
<dbReference type="BioGRID" id="34110">
    <property type="interactions" value="562"/>
</dbReference>
<dbReference type="DIP" id="DIP-6516N"/>
<dbReference type="FunCoup" id="P20484">
    <property type="interactions" value="688"/>
</dbReference>
<dbReference type="IntAct" id="P20484">
    <property type="interactions" value="55"/>
</dbReference>
<dbReference type="STRING" id="4932.YKL021C"/>
<dbReference type="iPTMnet" id="P20484"/>
<dbReference type="PaxDb" id="4932-YKL021C"/>
<dbReference type="PeptideAtlas" id="P20484"/>
<dbReference type="GeneID" id="853847"/>
<dbReference type="KEGG" id="sce:YKL021C"/>
<dbReference type="AGR" id="SGD:S000001504"/>
<dbReference type="SGD" id="S000001504">
    <property type="gene designation" value="MAK11"/>
</dbReference>
<dbReference type="eggNOG" id="KOG0294">
    <property type="taxonomic scope" value="Eukaryota"/>
</dbReference>
<dbReference type="HOGENOM" id="CLU_031466_2_0_1"/>
<dbReference type="InParanoid" id="P20484"/>
<dbReference type="OrthoDB" id="308449at2759"/>
<dbReference type="BioCyc" id="YEAST:G3O-31829-MONOMER"/>
<dbReference type="BioGRID-ORCS" id="853847">
    <property type="hits" value="1 hit in 10 CRISPR screens"/>
</dbReference>
<dbReference type="CD-CODE" id="BDAE0F88">
    <property type="entry name" value="Nucleolus"/>
</dbReference>
<dbReference type="PRO" id="PR:P20484"/>
<dbReference type="Proteomes" id="UP000002311">
    <property type="component" value="Chromosome XI"/>
</dbReference>
<dbReference type="RNAct" id="P20484">
    <property type="molecule type" value="protein"/>
</dbReference>
<dbReference type="GO" id="GO:0016020">
    <property type="term" value="C:membrane"/>
    <property type="evidence" value="ECO:0000314"/>
    <property type="project" value="SGD"/>
</dbReference>
<dbReference type="GO" id="GO:0031965">
    <property type="term" value="C:nuclear membrane"/>
    <property type="evidence" value="ECO:0007669"/>
    <property type="project" value="UniProtKB-SubCell"/>
</dbReference>
<dbReference type="GO" id="GO:0005730">
    <property type="term" value="C:nucleolus"/>
    <property type="evidence" value="ECO:0000318"/>
    <property type="project" value="GO_Central"/>
</dbReference>
<dbReference type="GO" id="GO:0004860">
    <property type="term" value="F:protein kinase inhibitor activity"/>
    <property type="evidence" value="ECO:0000318"/>
    <property type="project" value="GO_Central"/>
</dbReference>
<dbReference type="GO" id="GO:0000466">
    <property type="term" value="P:maturation of 5.8S rRNA from tricistronic rRNA transcript (SSU-rRNA, 5.8S rRNA, LSU-rRNA)"/>
    <property type="evidence" value="ECO:0000315"/>
    <property type="project" value="SGD"/>
</dbReference>
<dbReference type="GO" id="GO:0000463">
    <property type="term" value="P:maturation of LSU-rRNA from tricistronic rRNA transcript (SSU-rRNA, 5.8S rRNA, LSU-rRNA)"/>
    <property type="evidence" value="ECO:0000315"/>
    <property type="project" value="SGD"/>
</dbReference>
<dbReference type="GO" id="GO:0000027">
    <property type="term" value="P:ribosomal large subunit assembly"/>
    <property type="evidence" value="ECO:0000315"/>
    <property type="project" value="SGD"/>
</dbReference>
<dbReference type="GO" id="GO:0042273">
    <property type="term" value="P:ribosomal large subunit biogenesis"/>
    <property type="evidence" value="ECO:0000315"/>
    <property type="project" value="SGD"/>
</dbReference>
<dbReference type="FunFam" id="2.130.10.10:FF:001643">
    <property type="entry name" value="Mak11p"/>
    <property type="match status" value="1"/>
</dbReference>
<dbReference type="Gene3D" id="2.130.10.10">
    <property type="entry name" value="YVTN repeat-like/Quinoprotein amine dehydrogenase"/>
    <property type="match status" value="2"/>
</dbReference>
<dbReference type="InterPro" id="IPR020472">
    <property type="entry name" value="G-protein_beta_WD-40_rep"/>
</dbReference>
<dbReference type="InterPro" id="IPR051959">
    <property type="entry name" value="PAK1-Kinase_Regulator"/>
</dbReference>
<dbReference type="InterPro" id="IPR015943">
    <property type="entry name" value="WD40/YVTN_repeat-like_dom_sf"/>
</dbReference>
<dbReference type="InterPro" id="IPR019775">
    <property type="entry name" value="WD40_repeat_CS"/>
</dbReference>
<dbReference type="InterPro" id="IPR036322">
    <property type="entry name" value="WD40_repeat_dom_sf"/>
</dbReference>
<dbReference type="InterPro" id="IPR001680">
    <property type="entry name" value="WD40_rpt"/>
</dbReference>
<dbReference type="PANTHER" id="PTHR44675:SF1">
    <property type="entry name" value="P21-ACTIVATED PROTEIN KINASE-INTERACTING PROTEIN 1"/>
    <property type="match status" value="1"/>
</dbReference>
<dbReference type="PANTHER" id="PTHR44675">
    <property type="entry name" value="PAK1 INTERACTING PROTEIN 1"/>
    <property type="match status" value="1"/>
</dbReference>
<dbReference type="Pfam" id="PF00400">
    <property type="entry name" value="WD40"/>
    <property type="match status" value="4"/>
</dbReference>
<dbReference type="PRINTS" id="PR00320">
    <property type="entry name" value="GPROTEINBRPT"/>
</dbReference>
<dbReference type="SMART" id="SM00320">
    <property type="entry name" value="WD40"/>
    <property type="match status" value="5"/>
</dbReference>
<dbReference type="SUPFAM" id="SSF50978">
    <property type="entry name" value="WD40 repeat-like"/>
    <property type="match status" value="1"/>
</dbReference>
<dbReference type="PROSITE" id="PS00678">
    <property type="entry name" value="WD_REPEATS_1"/>
    <property type="match status" value="2"/>
</dbReference>
<dbReference type="PROSITE" id="PS50082">
    <property type="entry name" value="WD_REPEATS_2"/>
    <property type="match status" value="3"/>
</dbReference>
<dbReference type="PROSITE" id="PS50294">
    <property type="entry name" value="WD_REPEATS_REGION"/>
    <property type="match status" value="2"/>
</dbReference>
<evidence type="ECO:0000269" key="1">
    <source>
    </source>
</evidence>
<evidence type="ECO:0000269" key="2">
    <source>
    </source>
</evidence>
<evidence type="ECO:0000269" key="3">
    <source>
    </source>
</evidence>
<evidence type="ECO:0000269" key="4">
    <source>
    </source>
</evidence>
<evidence type="ECO:0000305" key="5"/>
<evidence type="ECO:0007744" key="6">
    <source>
    </source>
</evidence>
<evidence type="ECO:0007744" key="7">
    <source>
    </source>
</evidence>
<evidence type="ECO:0007744" key="8">
    <source>
    </source>
</evidence>
<evidence type="ECO:0007744" key="9">
    <source>
    </source>
</evidence>
<proteinExistence type="evidence at protein level"/>
<comment type="function">
    <text evidence="1 3 4">Essential for cell growth. Plays a role in assembly of 60S pre-ribosomal particles in the nucleolus. Also required for replication of the M1 double-stranded RNA of the L-A virus. This latter function may reflect an enhanced requirement for free 60S ribosomal particles for the translation of viral mRNAs which lack poly-A tails.</text>
</comment>
<comment type="subunit">
    <text>Associates with 60S pre-ribosomal particles.</text>
</comment>
<comment type="interaction">
    <interactant intactId="EBI-10930">
        <id>P20484</id>
    </interactant>
    <interactant intactId="EBI-34602">
        <id>Q06511</id>
        <label>RRP15</label>
    </interactant>
    <organismsDiffer>false</organismsDiffer>
    <experiments>4</experiments>
</comment>
<comment type="subcellular location">
    <subcellularLocation>
        <location evidence="3">Nucleus</location>
        <location evidence="3">Nucleolus</location>
    </subcellularLocation>
    <subcellularLocation>
        <location evidence="3">Nucleus membrane</location>
        <topology evidence="3">Peripheral membrane protein</topology>
    </subcellularLocation>
    <text>Membrane associated.</text>
</comment>
<comment type="miscellaneous">
    <text evidence="2">Present with 3730 molecules/cell in log phase SD medium.</text>
</comment>
<comment type="sequence caution" evidence="5">
    <conflict type="erroneous initiation">
        <sequence resource="EMBL-CDS" id="AAA34750"/>
    </conflict>
    <text>Extended N-terminus.</text>
</comment>
<comment type="sequence caution" evidence="5">
    <conflict type="erroneous initiation">
        <sequence resource="EMBL-CDS" id="CAA81856"/>
    </conflict>
    <text>Extended N-terminus.</text>
</comment>
<comment type="sequence caution" evidence="5">
    <conflict type="erroneous initiation">
        <sequence resource="EMBL-CDS" id="DAA09134"/>
    </conflict>
    <text>Extended N-terminus.</text>
</comment>